<geneLocation type="plasmid" evidence="5 7">
    <name>pHV3</name>
</geneLocation>
<name>DMSR_HALVD</name>
<sequence length="213" mass="22958">MADSTSGVAEAKADTLREQHLQLLLEIEPAKRCSCPLAGPDSAVEDVHTQLDGDVCHAEVTVGDGDASKVVHATTSVGDDCLCRAFAEFECVPRIRRADGECIVVETYLSDRAVITDLVERLDELTERVCLRRLTSDGRGDSTESKTATIDLSSLTAKQREAALIAVHHGYYETPRRTELATLAEALGISKSALSQRLNAVEAKLATAVFDSE</sequence>
<gene>
    <name evidence="3 5" type="primary">dmsR</name>
    <name evidence="5" type="ordered locus">HVO_B0361</name>
    <name evidence="6" type="ORF">C498_01850</name>
</gene>
<proteinExistence type="evidence at transcript level"/>
<dbReference type="EMBL" id="CP001953">
    <property type="protein sequence ID" value="ADE01457.1"/>
    <property type="molecule type" value="Genomic_DNA"/>
</dbReference>
<dbReference type="EMBL" id="AOHU01000021">
    <property type="protein sequence ID" value="ELY36850.1"/>
    <property type="molecule type" value="Genomic_DNA"/>
</dbReference>
<dbReference type="RefSeq" id="WP_004041174.1">
    <property type="nucleotide sequence ID" value="NC_013964.1"/>
</dbReference>
<dbReference type="PaxDb" id="309800-C498_01850"/>
<dbReference type="EnsemblBacteria" id="ADE01457">
    <property type="protein sequence ID" value="ADE01457"/>
    <property type="gene ID" value="HVO_B0361"/>
</dbReference>
<dbReference type="GeneID" id="8919166"/>
<dbReference type="KEGG" id="hvo:HVO_B0361"/>
<dbReference type="PATRIC" id="fig|309800.29.peg.357"/>
<dbReference type="eggNOG" id="arCOG02281">
    <property type="taxonomic scope" value="Archaea"/>
</dbReference>
<dbReference type="HOGENOM" id="CLU_109670_1_0_2"/>
<dbReference type="OrthoDB" id="51502at2157"/>
<dbReference type="Proteomes" id="UP000008243">
    <property type="component" value="Plasmid pHV3"/>
</dbReference>
<dbReference type="Proteomes" id="UP000011532">
    <property type="component" value="Unassembled WGS sequence"/>
</dbReference>
<dbReference type="GO" id="GO:0003700">
    <property type="term" value="F:DNA-binding transcription factor activity"/>
    <property type="evidence" value="ECO:0000305"/>
    <property type="project" value="UniProtKB"/>
</dbReference>
<dbReference type="GO" id="GO:1904620">
    <property type="term" value="P:cellular response to dimethyl sulfoxide"/>
    <property type="evidence" value="ECO:0000270"/>
    <property type="project" value="UniProtKB"/>
</dbReference>
<dbReference type="GO" id="GO:0045893">
    <property type="term" value="P:positive regulation of DNA-templated transcription"/>
    <property type="evidence" value="ECO:0000315"/>
    <property type="project" value="UniProtKB"/>
</dbReference>
<dbReference type="GO" id="GO:0045944">
    <property type="term" value="P:positive regulation of transcription by RNA polymerase II"/>
    <property type="evidence" value="ECO:0000305"/>
    <property type="project" value="UniProtKB"/>
</dbReference>
<dbReference type="GO" id="GO:0036293">
    <property type="term" value="P:response to decreased oxygen levels"/>
    <property type="evidence" value="ECO:0000270"/>
    <property type="project" value="UniProtKB"/>
</dbReference>
<dbReference type="InterPro" id="IPR056433">
    <property type="entry name" value="DmsR-like_N"/>
</dbReference>
<dbReference type="InterPro" id="IPR007050">
    <property type="entry name" value="HTH_bacterioopsin"/>
</dbReference>
<dbReference type="PANTHER" id="PTHR34236">
    <property type="entry name" value="DIMETHYL SULFOXIDE REDUCTASE TRANSCRIPTIONAL ACTIVATOR"/>
    <property type="match status" value="1"/>
</dbReference>
<dbReference type="PANTHER" id="PTHR34236:SF1">
    <property type="entry name" value="DIMETHYL SULFOXIDE REDUCTASE TRANSCRIPTIONAL ACTIVATOR"/>
    <property type="match status" value="1"/>
</dbReference>
<dbReference type="Pfam" id="PF24277">
    <property type="entry name" value="DmsR_N"/>
    <property type="match status" value="1"/>
</dbReference>
<dbReference type="Pfam" id="PF04967">
    <property type="entry name" value="HTH_10"/>
    <property type="match status" value="1"/>
</dbReference>
<comment type="function">
    <text evidence="2">Involved in activating dmsEABCD gene expression related to dimethyl sulfoxide (DMSO) reductase. Required for anaerobic respiration on dimethyl sulfoxide (DMSO).</text>
</comment>
<comment type="induction">
    <text evidence="2">By anaerobical conditions and dimethyl sulfoxide (DMSO).</text>
</comment>
<comment type="disruption phenotype">
    <text evidence="2">Cells lacking this gene have no dimethyl sulfoxide (DMSO) reductase activity under aerobic, anaerobic without substrate, anaerobic with DMSO as substrate nor under anaerobic with nitrate as substrate conditions. Cells are not able to grow anaerobically by dimethyl sulfoxide (DMSO) respiration. DMSO does not activate transcription of the dmsEABCD genes induced by the anaerobic conditions. No effect on aerobical growth or growth under denitrifying conditions.</text>
</comment>
<protein>
    <recommendedName>
        <fullName evidence="4">Dimethyl sulfoxide reductase transcriptional activator</fullName>
        <shortName evidence="4">DMSO reductase transcriptional activator</shortName>
    </recommendedName>
    <alternativeName>
        <fullName evidence="3">DMSO-responsive regulator DmsR</fullName>
    </alternativeName>
    <alternativeName>
        <fullName evidence="3">DNA-binding protein DmsR</fullName>
    </alternativeName>
</protein>
<accession>D4GQ08</accession>
<accession>A0A384LDZ4</accession>
<accession>L9VI23</accession>
<feature type="chain" id="PRO_0000454759" description="Dimethyl sulfoxide reductase transcriptional activator">
    <location>
        <begin position="1"/>
        <end position="213"/>
    </location>
</feature>
<feature type="domain" description="HTH bat-type" evidence="1">
    <location>
        <begin position="155"/>
        <end position="206"/>
    </location>
</feature>
<organism evidence="5">
    <name type="scientific">Haloferax volcanii (strain ATCC 29605 / DSM 3757 / JCM 8879 / NBRC 14742 / NCIMB 2012 / VKM B-1768 / DS2)</name>
    <name type="common">Halobacterium volcanii</name>
    <dbReference type="NCBI Taxonomy" id="309800"/>
    <lineage>
        <taxon>Archaea</taxon>
        <taxon>Methanobacteriati</taxon>
        <taxon>Methanobacteriota</taxon>
        <taxon>Stenosarchaea group</taxon>
        <taxon>Halobacteria</taxon>
        <taxon>Halobacteriales</taxon>
        <taxon>Haloferacaceae</taxon>
        <taxon>Haloferax</taxon>
    </lineage>
</organism>
<evidence type="ECO:0000255" key="1"/>
<evidence type="ECO:0000269" key="2">
    <source>
    </source>
</evidence>
<evidence type="ECO:0000303" key="3">
    <source>
    </source>
</evidence>
<evidence type="ECO:0000305" key="4"/>
<evidence type="ECO:0000312" key="5">
    <source>
        <dbReference type="EMBL" id="ADE01457.1"/>
    </source>
</evidence>
<evidence type="ECO:0000312" key="6">
    <source>
        <dbReference type="EMBL" id="ELY36850.1"/>
    </source>
</evidence>
<evidence type="ECO:0000312" key="7">
    <source>
        <dbReference type="Proteomes" id="UP000008243"/>
    </source>
</evidence>
<evidence type="ECO:0000312" key="8">
    <source>
        <dbReference type="Proteomes" id="UP000011532"/>
    </source>
</evidence>
<keyword id="KW-0010">Activator</keyword>
<keyword id="KW-0614">Plasmid</keyword>
<keyword id="KW-1185">Reference proteome</keyword>
<keyword id="KW-0804">Transcription</keyword>
<keyword id="KW-0805">Transcription regulation</keyword>
<reference evidence="5 7" key="1">
    <citation type="journal article" date="2010" name="PLoS ONE">
        <title>The complete genome sequence of Haloferax volcanii DS2, a model archaeon.</title>
        <authorList>
            <person name="Hartman A.L."/>
            <person name="Norais C."/>
            <person name="Badger J.H."/>
            <person name="Delmas S."/>
            <person name="Haldenby S."/>
            <person name="Madupu R."/>
            <person name="Robinson J."/>
            <person name="Khouri H."/>
            <person name="Ren Q."/>
            <person name="Lowe T.M."/>
            <person name="Maupin-Furlow J."/>
            <person name="Pohlschroder M."/>
            <person name="Daniels C."/>
            <person name="Pfeiffer F."/>
            <person name="Allers T."/>
            <person name="Eisen J.A."/>
        </authorList>
    </citation>
    <scope>NUCLEOTIDE SEQUENCE [LARGE SCALE GENOMIC DNA]</scope>
    <source>
        <strain evidence="7">ATCC 29605 / DSM 3757 / JCM 8879 / NBRC 14742 / NCIMB 2012 / VKM B-1768 / DS2</strain>
        <plasmid evidence="5">pHV3</plasmid>
    </source>
</reference>
<reference evidence="6 8" key="2">
    <citation type="journal article" date="2014" name="PLoS Genet.">
        <title>Phylogenetically driven sequencing of extremely halophilic archaea reveals strategies for static and dynamic osmo-response.</title>
        <authorList>
            <person name="Becker E.A."/>
            <person name="Seitzer P.M."/>
            <person name="Tritt A."/>
            <person name="Larsen D."/>
            <person name="Krusor M."/>
            <person name="Yao A.I."/>
            <person name="Wu D."/>
            <person name="Madern D."/>
            <person name="Eisen J.A."/>
            <person name="Darling A.E."/>
            <person name="Facciotti M.T."/>
        </authorList>
    </citation>
    <scope>NUCLEOTIDE SEQUENCE [LARGE SCALE GENOMIC DNA]</scope>
    <source>
        <strain evidence="8">ATCC 29605 / DSM 3757 / JCM 8879 / NBRC 14742 / NCIMB 2012 / VKM B-1768 / DS2</strain>
    </source>
</reference>
<reference key="3">
    <citation type="journal article" date="2016" name="Extremophiles">
        <title>Transcriptional regulation of dimethyl sulfoxide respiration in a haloarchaeon, Haloferax volcanii.</title>
        <authorList>
            <person name="Qi Q."/>
            <person name="Ito Y."/>
            <person name="Yoshimatsu K."/>
            <person name="Fujiwara T."/>
        </authorList>
    </citation>
    <scope>FUNCTION</scope>
    <scope>INDUCTION</scope>
    <scope>DISRUPTION PHENOTYPE</scope>
    <source>
        <strain evidence="3">DS2 / DS70</strain>
    </source>
</reference>